<proteinExistence type="inferred from homology"/>
<reference key="1">
    <citation type="submission" date="2008-06" db="EMBL/GenBank/DDBJ databases">
        <title>Complete sequence of Chlorobaculum parvum NCIB 8327.</title>
        <authorList>
            <consortium name="US DOE Joint Genome Institute"/>
            <person name="Lucas S."/>
            <person name="Copeland A."/>
            <person name="Lapidus A."/>
            <person name="Glavina del Rio T."/>
            <person name="Dalin E."/>
            <person name="Tice H."/>
            <person name="Bruce D."/>
            <person name="Goodwin L."/>
            <person name="Pitluck S."/>
            <person name="Schmutz J."/>
            <person name="Larimer F."/>
            <person name="Land M."/>
            <person name="Hauser L."/>
            <person name="Kyrpides N."/>
            <person name="Mikhailova N."/>
            <person name="Zhao F."/>
            <person name="Li T."/>
            <person name="Liu Z."/>
            <person name="Overmann J."/>
            <person name="Bryant D.A."/>
            <person name="Richardson P."/>
        </authorList>
    </citation>
    <scope>NUCLEOTIDE SEQUENCE [LARGE SCALE GENOMIC DNA]</scope>
    <source>
        <strain>DSM 263 / NCIMB 8327</strain>
    </source>
</reference>
<gene>
    <name evidence="1" type="primary">serS</name>
    <name type="ordered locus">Cpar_0623</name>
</gene>
<organism>
    <name type="scientific">Chlorobaculum parvum (strain DSM 263 / NCIMB 8327)</name>
    <name type="common">Chlorobium vibrioforme subsp. thiosulfatophilum</name>
    <dbReference type="NCBI Taxonomy" id="517417"/>
    <lineage>
        <taxon>Bacteria</taxon>
        <taxon>Pseudomonadati</taxon>
        <taxon>Chlorobiota</taxon>
        <taxon>Chlorobiia</taxon>
        <taxon>Chlorobiales</taxon>
        <taxon>Chlorobiaceae</taxon>
        <taxon>Chlorobaculum</taxon>
    </lineage>
</organism>
<keyword id="KW-0030">Aminoacyl-tRNA synthetase</keyword>
<keyword id="KW-0067">ATP-binding</keyword>
<keyword id="KW-0963">Cytoplasm</keyword>
<keyword id="KW-0436">Ligase</keyword>
<keyword id="KW-0547">Nucleotide-binding</keyword>
<keyword id="KW-0648">Protein biosynthesis</keyword>
<comment type="function">
    <text evidence="1">Catalyzes the attachment of serine to tRNA(Ser). Is also able to aminoacylate tRNA(Sec) with serine, to form the misacylated tRNA L-seryl-tRNA(Sec), which will be further converted into selenocysteinyl-tRNA(Sec).</text>
</comment>
<comment type="catalytic activity">
    <reaction evidence="1">
        <text>tRNA(Ser) + L-serine + ATP = L-seryl-tRNA(Ser) + AMP + diphosphate + H(+)</text>
        <dbReference type="Rhea" id="RHEA:12292"/>
        <dbReference type="Rhea" id="RHEA-COMP:9669"/>
        <dbReference type="Rhea" id="RHEA-COMP:9703"/>
        <dbReference type="ChEBI" id="CHEBI:15378"/>
        <dbReference type="ChEBI" id="CHEBI:30616"/>
        <dbReference type="ChEBI" id="CHEBI:33019"/>
        <dbReference type="ChEBI" id="CHEBI:33384"/>
        <dbReference type="ChEBI" id="CHEBI:78442"/>
        <dbReference type="ChEBI" id="CHEBI:78533"/>
        <dbReference type="ChEBI" id="CHEBI:456215"/>
        <dbReference type="EC" id="6.1.1.11"/>
    </reaction>
</comment>
<comment type="catalytic activity">
    <reaction evidence="1">
        <text>tRNA(Sec) + L-serine + ATP = L-seryl-tRNA(Sec) + AMP + diphosphate + H(+)</text>
        <dbReference type="Rhea" id="RHEA:42580"/>
        <dbReference type="Rhea" id="RHEA-COMP:9742"/>
        <dbReference type="Rhea" id="RHEA-COMP:10128"/>
        <dbReference type="ChEBI" id="CHEBI:15378"/>
        <dbReference type="ChEBI" id="CHEBI:30616"/>
        <dbReference type="ChEBI" id="CHEBI:33019"/>
        <dbReference type="ChEBI" id="CHEBI:33384"/>
        <dbReference type="ChEBI" id="CHEBI:78442"/>
        <dbReference type="ChEBI" id="CHEBI:78533"/>
        <dbReference type="ChEBI" id="CHEBI:456215"/>
        <dbReference type="EC" id="6.1.1.11"/>
    </reaction>
</comment>
<comment type="pathway">
    <text evidence="1">Aminoacyl-tRNA biosynthesis; selenocysteinyl-tRNA(Sec) biosynthesis; L-seryl-tRNA(Sec) from L-serine and tRNA(Sec): step 1/1.</text>
</comment>
<comment type="subunit">
    <text evidence="1">Homodimer. The tRNA molecule binds across the dimer.</text>
</comment>
<comment type="subcellular location">
    <subcellularLocation>
        <location evidence="1">Cytoplasm</location>
    </subcellularLocation>
</comment>
<comment type="domain">
    <text evidence="1">Consists of two distinct domains, a catalytic core and a N-terminal extension that is involved in tRNA binding.</text>
</comment>
<comment type="similarity">
    <text evidence="1">Belongs to the class-II aminoacyl-tRNA synthetase family. Type-1 seryl-tRNA synthetase subfamily.</text>
</comment>
<name>SYS_CHLP8</name>
<evidence type="ECO:0000255" key="1">
    <source>
        <dbReference type="HAMAP-Rule" id="MF_00176"/>
    </source>
</evidence>
<accession>B3QM90</accession>
<protein>
    <recommendedName>
        <fullName evidence="1">Serine--tRNA ligase</fullName>
        <ecNumber evidence="1">6.1.1.11</ecNumber>
    </recommendedName>
    <alternativeName>
        <fullName evidence="1">Seryl-tRNA synthetase</fullName>
        <shortName evidence="1">SerRS</shortName>
    </alternativeName>
    <alternativeName>
        <fullName evidence="1">Seryl-tRNA(Ser/Sec) synthetase</fullName>
    </alternativeName>
</protein>
<dbReference type="EC" id="6.1.1.11" evidence="1"/>
<dbReference type="EMBL" id="CP001099">
    <property type="protein sequence ID" value="ACF11043.1"/>
    <property type="molecule type" value="Genomic_DNA"/>
</dbReference>
<dbReference type="RefSeq" id="WP_012501876.1">
    <property type="nucleotide sequence ID" value="NC_011027.1"/>
</dbReference>
<dbReference type="SMR" id="B3QM90"/>
<dbReference type="STRING" id="517417.Cpar_0623"/>
<dbReference type="KEGG" id="cpc:Cpar_0623"/>
<dbReference type="eggNOG" id="COG0172">
    <property type="taxonomic scope" value="Bacteria"/>
</dbReference>
<dbReference type="HOGENOM" id="CLU_023797_1_1_10"/>
<dbReference type="OrthoDB" id="9804647at2"/>
<dbReference type="UniPathway" id="UPA00906">
    <property type="reaction ID" value="UER00895"/>
</dbReference>
<dbReference type="Proteomes" id="UP000008811">
    <property type="component" value="Chromosome"/>
</dbReference>
<dbReference type="GO" id="GO:0005737">
    <property type="term" value="C:cytoplasm"/>
    <property type="evidence" value="ECO:0007669"/>
    <property type="project" value="UniProtKB-SubCell"/>
</dbReference>
<dbReference type="GO" id="GO:0005524">
    <property type="term" value="F:ATP binding"/>
    <property type="evidence" value="ECO:0007669"/>
    <property type="project" value="UniProtKB-UniRule"/>
</dbReference>
<dbReference type="GO" id="GO:0004828">
    <property type="term" value="F:serine-tRNA ligase activity"/>
    <property type="evidence" value="ECO:0007669"/>
    <property type="project" value="UniProtKB-UniRule"/>
</dbReference>
<dbReference type="GO" id="GO:0016260">
    <property type="term" value="P:selenocysteine biosynthetic process"/>
    <property type="evidence" value="ECO:0007669"/>
    <property type="project" value="UniProtKB-UniRule"/>
</dbReference>
<dbReference type="GO" id="GO:0006434">
    <property type="term" value="P:seryl-tRNA aminoacylation"/>
    <property type="evidence" value="ECO:0007669"/>
    <property type="project" value="UniProtKB-UniRule"/>
</dbReference>
<dbReference type="CDD" id="cd00770">
    <property type="entry name" value="SerRS_core"/>
    <property type="match status" value="1"/>
</dbReference>
<dbReference type="Gene3D" id="3.30.930.10">
    <property type="entry name" value="Bira Bifunctional Protein, Domain 2"/>
    <property type="match status" value="1"/>
</dbReference>
<dbReference type="Gene3D" id="1.10.287.40">
    <property type="entry name" value="Serine-tRNA synthetase, tRNA binding domain"/>
    <property type="match status" value="1"/>
</dbReference>
<dbReference type="HAMAP" id="MF_00176">
    <property type="entry name" value="Ser_tRNA_synth_type1"/>
    <property type="match status" value="1"/>
</dbReference>
<dbReference type="InterPro" id="IPR002314">
    <property type="entry name" value="aa-tRNA-synt_IIb"/>
</dbReference>
<dbReference type="InterPro" id="IPR006195">
    <property type="entry name" value="aa-tRNA-synth_II"/>
</dbReference>
<dbReference type="InterPro" id="IPR045864">
    <property type="entry name" value="aa-tRNA-synth_II/BPL/LPL"/>
</dbReference>
<dbReference type="InterPro" id="IPR002317">
    <property type="entry name" value="Ser-tRNA-ligase_type_1"/>
</dbReference>
<dbReference type="InterPro" id="IPR015866">
    <property type="entry name" value="Ser-tRNA-synth_1_N"/>
</dbReference>
<dbReference type="InterPro" id="IPR042103">
    <property type="entry name" value="SerRS_1_N_sf"/>
</dbReference>
<dbReference type="InterPro" id="IPR033729">
    <property type="entry name" value="SerRS_core"/>
</dbReference>
<dbReference type="InterPro" id="IPR010978">
    <property type="entry name" value="tRNA-bd_arm"/>
</dbReference>
<dbReference type="NCBIfam" id="TIGR00414">
    <property type="entry name" value="serS"/>
    <property type="match status" value="1"/>
</dbReference>
<dbReference type="PANTHER" id="PTHR43697:SF1">
    <property type="entry name" value="SERINE--TRNA LIGASE"/>
    <property type="match status" value="1"/>
</dbReference>
<dbReference type="PANTHER" id="PTHR43697">
    <property type="entry name" value="SERYL-TRNA SYNTHETASE"/>
    <property type="match status" value="1"/>
</dbReference>
<dbReference type="Pfam" id="PF02403">
    <property type="entry name" value="Seryl_tRNA_N"/>
    <property type="match status" value="1"/>
</dbReference>
<dbReference type="Pfam" id="PF00587">
    <property type="entry name" value="tRNA-synt_2b"/>
    <property type="match status" value="1"/>
</dbReference>
<dbReference type="PIRSF" id="PIRSF001529">
    <property type="entry name" value="Ser-tRNA-synth_IIa"/>
    <property type="match status" value="1"/>
</dbReference>
<dbReference type="PRINTS" id="PR00981">
    <property type="entry name" value="TRNASYNTHSER"/>
</dbReference>
<dbReference type="SUPFAM" id="SSF55681">
    <property type="entry name" value="Class II aaRS and biotin synthetases"/>
    <property type="match status" value="1"/>
</dbReference>
<dbReference type="SUPFAM" id="SSF46589">
    <property type="entry name" value="tRNA-binding arm"/>
    <property type="match status" value="1"/>
</dbReference>
<dbReference type="PROSITE" id="PS50862">
    <property type="entry name" value="AA_TRNA_LIGASE_II"/>
    <property type="match status" value="1"/>
</dbReference>
<sequence>MLDISYIRQNPEEVKEMLRRRQQSDDAPKVDRLLERDAERKAMVQRTDDLKALRNRVSKEIANIKRTGQGSGEELISQMKEVSDQIADLDLGLSTLEGEIEELLLTLPNKLHESVPEGRSADENILYKGPVSFEHNLDFPVKDHLELGKSLGLLDFERGAKITGAGFPVYTGKGARLERALINFMLDTHSANHGYTEVFPPFMVNKESLRGTGQWPKFADQVYHMPEDGLYAIPTAEVPVTNLHRGEMLEDDKLPIAYAAYSACFRREAGSYGKDTRGFLRVHQFNKVEMVRFTRPEKSYEALEEILSHAEAILCALKIPYRVITLCSGDISANAAKCYDIEVWSPAENKYLEASSVSNFEDYQARRSNIRFKPGGKGKPEFVHTLNGSGLATSRLMVSLLEHYQTADGKIMVPEVLRPYTGFDVIE</sequence>
<feature type="chain" id="PRO_1000098046" description="Serine--tRNA ligase">
    <location>
        <begin position="1"/>
        <end position="427"/>
    </location>
</feature>
<feature type="binding site" evidence="1">
    <location>
        <begin position="235"/>
        <end position="237"/>
    </location>
    <ligand>
        <name>L-serine</name>
        <dbReference type="ChEBI" id="CHEBI:33384"/>
    </ligand>
</feature>
<feature type="binding site" evidence="1">
    <location>
        <begin position="266"/>
        <end position="268"/>
    </location>
    <ligand>
        <name>ATP</name>
        <dbReference type="ChEBI" id="CHEBI:30616"/>
    </ligand>
</feature>
<feature type="binding site" evidence="1">
    <location>
        <position position="282"/>
    </location>
    <ligand>
        <name>ATP</name>
        <dbReference type="ChEBI" id="CHEBI:30616"/>
    </ligand>
</feature>
<feature type="binding site" evidence="1">
    <location>
        <position position="289"/>
    </location>
    <ligand>
        <name>L-serine</name>
        <dbReference type="ChEBI" id="CHEBI:33384"/>
    </ligand>
</feature>
<feature type="binding site" evidence="1">
    <location>
        <begin position="353"/>
        <end position="356"/>
    </location>
    <ligand>
        <name>ATP</name>
        <dbReference type="ChEBI" id="CHEBI:30616"/>
    </ligand>
</feature>
<feature type="binding site" evidence="1">
    <location>
        <position position="389"/>
    </location>
    <ligand>
        <name>L-serine</name>
        <dbReference type="ChEBI" id="CHEBI:33384"/>
    </ligand>
</feature>